<accession>Q8EK57</accession>
<comment type="function">
    <text evidence="1">This is one of the proteins that bind and probably mediate the attachment of the 5S RNA into the large ribosomal subunit, where it forms part of the central protuberance. In the 70S ribosome it contacts protein S13 of the 30S subunit (bridge B1b), connecting the 2 subunits; this bridge is implicated in subunit movement. Contacts the P site tRNA; the 5S rRNA and some of its associated proteins might help stabilize positioning of ribosome-bound tRNAs.</text>
</comment>
<comment type="subunit">
    <text evidence="1">Part of the 50S ribosomal subunit; part of the 5S rRNA/L5/L18/L25 subcomplex. Contacts the 5S rRNA and the P site tRNA. Forms a bridge to the 30S subunit in the 70S ribosome.</text>
</comment>
<comment type="similarity">
    <text evidence="1">Belongs to the universal ribosomal protein uL5 family.</text>
</comment>
<name>RL5_SHEON</name>
<reference key="1">
    <citation type="journal article" date="2002" name="Nat. Biotechnol.">
        <title>Genome sequence of the dissimilatory metal ion-reducing bacterium Shewanella oneidensis.</title>
        <authorList>
            <person name="Heidelberg J.F."/>
            <person name="Paulsen I.T."/>
            <person name="Nelson K.E."/>
            <person name="Gaidos E.J."/>
            <person name="Nelson W.C."/>
            <person name="Read T.D."/>
            <person name="Eisen J.A."/>
            <person name="Seshadri R."/>
            <person name="Ward N.L."/>
            <person name="Methe B.A."/>
            <person name="Clayton R.A."/>
            <person name="Meyer T."/>
            <person name="Tsapin A."/>
            <person name="Scott J."/>
            <person name="Beanan M.J."/>
            <person name="Brinkac L.M."/>
            <person name="Daugherty S.C."/>
            <person name="DeBoy R.T."/>
            <person name="Dodson R.J."/>
            <person name="Durkin A.S."/>
            <person name="Haft D.H."/>
            <person name="Kolonay J.F."/>
            <person name="Madupu R."/>
            <person name="Peterson J.D."/>
            <person name="Umayam L.A."/>
            <person name="White O."/>
            <person name="Wolf A.M."/>
            <person name="Vamathevan J.J."/>
            <person name="Weidman J.F."/>
            <person name="Impraim M."/>
            <person name="Lee K."/>
            <person name="Berry K.J."/>
            <person name="Lee C."/>
            <person name="Mueller J."/>
            <person name="Khouri H.M."/>
            <person name="Gill J."/>
            <person name="Utterback T.R."/>
            <person name="McDonald L.A."/>
            <person name="Feldblyum T.V."/>
            <person name="Smith H.O."/>
            <person name="Venter J.C."/>
            <person name="Nealson K.H."/>
            <person name="Fraser C.M."/>
        </authorList>
    </citation>
    <scope>NUCLEOTIDE SEQUENCE [LARGE SCALE GENOMIC DNA]</scope>
    <source>
        <strain>ATCC 700550 / JCM 31522 / CIP 106686 / LMG 19005 / NCIMB 14063 / MR-1</strain>
    </source>
</reference>
<keyword id="KW-1185">Reference proteome</keyword>
<keyword id="KW-0687">Ribonucleoprotein</keyword>
<keyword id="KW-0689">Ribosomal protein</keyword>
<keyword id="KW-0694">RNA-binding</keyword>
<keyword id="KW-0699">rRNA-binding</keyword>
<keyword id="KW-0820">tRNA-binding</keyword>
<evidence type="ECO:0000255" key="1">
    <source>
        <dbReference type="HAMAP-Rule" id="MF_01333"/>
    </source>
</evidence>
<evidence type="ECO:0000305" key="2"/>
<sequence length="179" mass="20232">MAKLHDKYQETVVAELTQKFGYTSVMQVPRIEKITLNMGVGEAVADKKVMEHAVRDMTAIAGQKPVVTVARKSVAGFKIREGYPIGCKVTLRGERMWEFLERLVDIAIPRIRDFRGLSAKAFDGRGNYAMGVREQIIFPEIDYDKIDKIRGMDIVITTSAKTDEEGRALLDAFNFPFKK</sequence>
<dbReference type="EMBL" id="AE014299">
    <property type="protein sequence ID" value="AAN53328.1"/>
    <property type="molecule type" value="Genomic_DNA"/>
</dbReference>
<dbReference type="RefSeq" id="NP_715883.1">
    <property type="nucleotide sequence ID" value="NC_004347.2"/>
</dbReference>
<dbReference type="RefSeq" id="WP_011070624.1">
    <property type="nucleotide sequence ID" value="NZ_CP053946.1"/>
</dbReference>
<dbReference type="SMR" id="Q8EK57"/>
<dbReference type="STRING" id="211586.SO_0243"/>
<dbReference type="PaxDb" id="211586-SO_0243"/>
<dbReference type="GeneID" id="75190606"/>
<dbReference type="KEGG" id="son:SO_0243"/>
<dbReference type="PATRIC" id="fig|211586.12.peg.231"/>
<dbReference type="eggNOG" id="COG0094">
    <property type="taxonomic scope" value="Bacteria"/>
</dbReference>
<dbReference type="HOGENOM" id="CLU_061015_2_1_6"/>
<dbReference type="OrthoDB" id="9806626at2"/>
<dbReference type="PhylomeDB" id="Q8EK57"/>
<dbReference type="BioCyc" id="SONE211586:G1GMP-232-MONOMER"/>
<dbReference type="Proteomes" id="UP000008186">
    <property type="component" value="Chromosome"/>
</dbReference>
<dbReference type="GO" id="GO:0022625">
    <property type="term" value="C:cytosolic large ribosomal subunit"/>
    <property type="evidence" value="ECO:0000318"/>
    <property type="project" value="GO_Central"/>
</dbReference>
<dbReference type="GO" id="GO:0003723">
    <property type="term" value="F:RNA binding"/>
    <property type="evidence" value="ECO:0000318"/>
    <property type="project" value="GO_Central"/>
</dbReference>
<dbReference type="GO" id="GO:0019843">
    <property type="term" value="F:rRNA binding"/>
    <property type="evidence" value="ECO:0007669"/>
    <property type="project" value="UniProtKB-UniRule"/>
</dbReference>
<dbReference type="GO" id="GO:0003735">
    <property type="term" value="F:structural constituent of ribosome"/>
    <property type="evidence" value="ECO:0000318"/>
    <property type="project" value="GO_Central"/>
</dbReference>
<dbReference type="GO" id="GO:0000049">
    <property type="term" value="F:tRNA binding"/>
    <property type="evidence" value="ECO:0007669"/>
    <property type="project" value="UniProtKB-UniRule"/>
</dbReference>
<dbReference type="GO" id="GO:0006412">
    <property type="term" value="P:translation"/>
    <property type="evidence" value="ECO:0000318"/>
    <property type="project" value="GO_Central"/>
</dbReference>
<dbReference type="FunFam" id="3.30.1440.10:FF:000001">
    <property type="entry name" value="50S ribosomal protein L5"/>
    <property type="match status" value="1"/>
</dbReference>
<dbReference type="Gene3D" id="3.30.1440.10">
    <property type="match status" value="1"/>
</dbReference>
<dbReference type="HAMAP" id="MF_01333_B">
    <property type="entry name" value="Ribosomal_uL5_B"/>
    <property type="match status" value="1"/>
</dbReference>
<dbReference type="InterPro" id="IPR002132">
    <property type="entry name" value="Ribosomal_uL5"/>
</dbReference>
<dbReference type="InterPro" id="IPR020930">
    <property type="entry name" value="Ribosomal_uL5_bac-type"/>
</dbReference>
<dbReference type="InterPro" id="IPR031309">
    <property type="entry name" value="Ribosomal_uL5_C"/>
</dbReference>
<dbReference type="InterPro" id="IPR020929">
    <property type="entry name" value="Ribosomal_uL5_CS"/>
</dbReference>
<dbReference type="InterPro" id="IPR022803">
    <property type="entry name" value="Ribosomal_uL5_dom_sf"/>
</dbReference>
<dbReference type="InterPro" id="IPR031310">
    <property type="entry name" value="Ribosomal_uL5_N"/>
</dbReference>
<dbReference type="NCBIfam" id="NF000585">
    <property type="entry name" value="PRK00010.1"/>
    <property type="match status" value="1"/>
</dbReference>
<dbReference type="PANTHER" id="PTHR11994">
    <property type="entry name" value="60S RIBOSOMAL PROTEIN L11-RELATED"/>
    <property type="match status" value="1"/>
</dbReference>
<dbReference type="Pfam" id="PF00281">
    <property type="entry name" value="Ribosomal_L5"/>
    <property type="match status" value="1"/>
</dbReference>
<dbReference type="Pfam" id="PF00673">
    <property type="entry name" value="Ribosomal_L5_C"/>
    <property type="match status" value="1"/>
</dbReference>
<dbReference type="PIRSF" id="PIRSF002161">
    <property type="entry name" value="Ribosomal_L5"/>
    <property type="match status" value="1"/>
</dbReference>
<dbReference type="SUPFAM" id="SSF55282">
    <property type="entry name" value="RL5-like"/>
    <property type="match status" value="1"/>
</dbReference>
<dbReference type="PROSITE" id="PS00358">
    <property type="entry name" value="RIBOSOMAL_L5"/>
    <property type="match status" value="1"/>
</dbReference>
<gene>
    <name evidence="1" type="primary">rplE</name>
    <name type="ordered locus">SO_0243</name>
</gene>
<proteinExistence type="inferred from homology"/>
<protein>
    <recommendedName>
        <fullName evidence="1">Large ribosomal subunit protein uL5</fullName>
    </recommendedName>
    <alternativeName>
        <fullName evidence="2">50S ribosomal protein L5</fullName>
    </alternativeName>
</protein>
<organism>
    <name type="scientific">Shewanella oneidensis (strain ATCC 700550 / JCM 31522 / CIP 106686 / LMG 19005 / NCIMB 14063 / MR-1)</name>
    <dbReference type="NCBI Taxonomy" id="211586"/>
    <lineage>
        <taxon>Bacteria</taxon>
        <taxon>Pseudomonadati</taxon>
        <taxon>Pseudomonadota</taxon>
        <taxon>Gammaproteobacteria</taxon>
        <taxon>Alteromonadales</taxon>
        <taxon>Shewanellaceae</taxon>
        <taxon>Shewanella</taxon>
    </lineage>
</organism>
<feature type="chain" id="PRO_0000124983" description="Large ribosomal subunit protein uL5">
    <location>
        <begin position="1"/>
        <end position="179"/>
    </location>
</feature>